<keyword id="KW-0256">Endoplasmic reticulum</keyword>
<keyword id="KW-0472">Membrane</keyword>
<keyword id="KW-0653">Protein transport</keyword>
<keyword id="KW-1267">Proteomics identification</keyword>
<keyword id="KW-1185">Reference proteome</keyword>
<keyword id="KW-0811">Translocation</keyword>
<keyword id="KW-0812">Transmembrane</keyword>
<keyword id="KW-1133">Transmembrane helix</keyword>
<keyword id="KW-0813">Transport</keyword>
<keyword id="KW-0834">Unfolded protein response</keyword>
<evidence type="ECO:0000250" key="1">
    <source>
        <dbReference type="UniProtKB" id="Q9R2C1"/>
    </source>
</evidence>
<evidence type="ECO:0000255" key="2"/>
<evidence type="ECO:0000256" key="3">
    <source>
        <dbReference type="SAM" id="MobiDB-lite"/>
    </source>
</evidence>
<evidence type="ECO:0000305" key="4"/>
<proteinExistence type="evidence at protein level"/>
<organism>
    <name type="scientific">Homo sapiens</name>
    <name type="common">Human</name>
    <dbReference type="NCBI Taxonomy" id="9606"/>
    <lineage>
        <taxon>Eukaryota</taxon>
        <taxon>Metazoa</taxon>
        <taxon>Chordata</taxon>
        <taxon>Craniata</taxon>
        <taxon>Vertebrata</taxon>
        <taxon>Euteleostomi</taxon>
        <taxon>Mammalia</taxon>
        <taxon>Eutheria</taxon>
        <taxon>Euarchontoglires</taxon>
        <taxon>Primates</taxon>
        <taxon>Haplorrhini</taxon>
        <taxon>Catarrhini</taxon>
        <taxon>Hominidae</taxon>
        <taxon>Homo</taxon>
    </lineage>
</organism>
<protein>
    <recommendedName>
        <fullName>Stress-associated endoplasmic reticulum protein 1</fullName>
    </recommendedName>
    <alternativeName>
        <fullName>Ribosome-attached membrane protein 4</fullName>
    </alternativeName>
</protein>
<comment type="function">
    <text evidence="1">Interacts with target proteins during their translocation into the lumen of the endoplasmic reticulum. Protects unfolded target proteins against degradation during ER stress. May facilitate glycosylation of target proteins after termination of ER stress. May modulate the use of N-glycosylation sites on target proteins.</text>
</comment>
<comment type="subunit">
    <text evidence="1">Interacts with SEC61B, SEC61A1 and the SEC61 complex. Interacts with CANX.</text>
</comment>
<comment type="interaction">
    <interactant intactId="EBI-10329948">
        <id>Q9Y6X1</id>
    </interactant>
    <interactant intactId="EBI-2848814">
        <id>Q92685</id>
        <label>ALG3</label>
    </interactant>
    <organismsDiffer>false</organismsDiffer>
    <experiments>3</experiments>
</comment>
<comment type="interaction">
    <interactant intactId="EBI-10329948">
        <id>Q9Y6X1</id>
    </interactant>
    <interactant intactId="EBI-2606935">
        <id>Q96BI3</id>
        <label>APH1A</label>
    </interactant>
    <organismsDiffer>false</organismsDiffer>
    <experiments>3</experiments>
</comment>
<comment type="interaction">
    <interactant intactId="EBI-10329948">
        <id>Q9Y6X1</id>
    </interactant>
    <interactant intactId="EBI-13059134">
        <id>Q13520</id>
        <label>AQP6</label>
    </interactant>
    <organismsDiffer>false</organismsDiffer>
    <experiments>3</experiments>
</comment>
<comment type="interaction">
    <interactant intactId="EBI-10329948">
        <id>Q9Y6X1</id>
    </interactant>
    <interactant intactId="EBI-19124986">
        <id>O94778</id>
        <label>AQP8</label>
    </interactant>
    <organismsDiffer>false</organismsDiffer>
    <experiments>3</experiments>
</comment>
<comment type="interaction">
    <interactant intactId="EBI-10329948">
        <id>Q9Y6X1</id>
    </interactant>
    <interactant intactId="EBI-700794">
        <id>Q13323</id>
        <label>BIK</label>
    </interactant>
    <organismsDiffer>false</organismsDiffer>
    <experiments>3</experiments>
</comment>
<comment type="interaction">
    <interactant intactId="EBI-10329948">
        <id>Q9Y6X1</id>
    </interactant>
    <interactant intactId="EBI-11532900">
        <id>J3KQ12</id>
        <label>BSCL2</label>
    </interactant>
    <organismsDiffer>false</organismsDiffer>
    <experiments>3</experiments>
</comment>
<comment type="interaction">
    <interactant intactId="EBI-10329948">
        <id>Q9Y6X1</id>
    </interactant>
    <interactant intactId="EBI-12222807">
        <id>P04233-2</id>
        <label>CD74</label>
    </interactant>
    <organismsDiffer>false</organismsDiffer>
    <experiments>3</experiments>
</comment>
<comment type="interaction">
    <interactant intactId="EBI-10329948">
        <id>Q9Y6X1</id>
    </interactant>
    <interactant intactId="EBI-7797864">
        <id>P11912</id>
        <label>CD79A</label>
    </interactant>
    <organismsDiffer>false</organismsDiffer>
    <experiments>3</experiments>
</comment>
<comment type="interaction">
    <interactant intactId="EBI-10329948">
        <id>Q9Y6X1</id>
    </interactant>
    <interactant intactId="EBI-17233035">
        <id>Q9BUF7-2</id>
        <label>CRB3</label>
    </interactant>
    <organismsDiffer>false</organismsDiffer>
    <experiments>3</experiments>
</comment>
<comment type="interaction">
    <interactant intactId="EBI-10329948">
        <id>Q9Y6X1</id>
    </interactant>
    <interactant intactId="EBI-8637742">
        <id>Q53TN4</id>
        <label>CYBRD1</label>
    </interactant>
    <organismsDiffer>false</organismsDiffer>
    <experiments>3</experiments>
</comment>
<comment type="interaction">
    <interactant intactId="EBI-10329948">
        <id>Q9Y6X1</id>
    </interactant>
    <interactant intactId="EBI-3915253">
        <id>Q15125</id>
        <label>EBP</label>
    </interactant>
    <organismsDiffer>false</organismsDiffer>
    <experiments>3</experiments>
</comment>
<comment type="interaction">
    <interactant intactId="EBI-10329948">
        <id>Q9Y6X1</id>
    </interactant>
    <interactant intactId="EBI-18636064">
        <id>Q8TBP5</id>
        <label>FAM174A</label>
    </interactant>
    <organismsDiffer>false</organismsDiffer>
    <experiments>3</experiments>
</comment>
<comment type="interaction">
    <interactant intactId="EBI-10329948">
        <id>Q9Y6X1</id>
    </interactant>
    <interactant intactId="EBI-18304435">
        <id>Q5JX71</id>
        <label>FAM209A</label>
    </interactant>
    <organismsDiffer>false</organismsDiffer>
    <experiments>3</experiments>
</comment>
<comment type="interaction">
    <interactant intactId="EBI-10329948">
        <id>Q9Y6X1</id>
    </interactant>
    <interactant intactId="EBI-18938272">
        <id>Q96KR6</id>
        <label>FAM210B</label>
    </interactant>
    <organismsDiffer>false</organismsDiffer>
    <experiments>3</experiments>
</comment>
<comment type="interaction">
    <interactant intactId="EBI-10329948">
        <id>Q9Y6X1</id>
    </interactant>
    <interactant intactId="EBI-6911547">
        <id>A2A2Y4</id>
        <label>FRMD3</label>
    </interactant>
    <organismsDiffer>false</organismsDiffer>
    <experiments>3</experiments>
</comment>
<comment type="interaction">
    <interactant intactId="EBI-10329948">
        <id>Q9Y6X1</id>
    </interactant>
    <interactant intactId="EBI-3908586">
        <id>O75712</id>
        <label>GJB3</label>
    </interactant>
    <organismsDiffer>false</organismsDiffer>
    <experiments>3</experiments>
</comment>
<comment type="interaction">
    <interactant intactId="EBI-10329948">
        <id>Q9Y6X1</id>
    </interactant>
    <interactant intactId="EBI-3909454">
        <id>O95377</id>
        <label>GJB5</label>
    </interactant>
    <organismsDiffer>false</organismsDiffer>
    <experiments>3</experiments>
</comment>
<comment type="interaction">
    <interactant intactId="EBI-10329948">
        <id>Q9Y6X1</id>
    </interactant>
    <interactant intactId="EBI-3933251">
        <id>Q9NS71</id>
        <label>GKN1</label>
    </interactant>
    <organismsDiffer>false</organismsDiffer>
    <experiments>3</experiments>
</comment>
<comment type="interaction">
    <interactant intactId="EBI-10329948">
        <id>Q9Y6X1</id>
    </interactant>
    <interactant intactId="EBI-2927498">
        <id>O60883</id>
        <label>GPR37L1</label>
    </interactant>
    <organismsDiffer>false</organismsDiffer>
    <experiments>3</experiments>
</comment>
<comment type="interaction">
    <interactant intactId="EBI-10329948">
        <id>Q9Y6X1</id>
    </interactant>
    <interactant intactId="EBI-11721746">
        <id>Q8TED1</id>
        <label>GPX8</label>
    </interactant>
    <organismsDiffer>false</organismsDiffer>
    <experiments>3</experiments>
</comment>
<comment type="interaction">
    <interactant intactId="EBI-10329948">
        <id>Q9Y6X1</id>
    </interactant>
    <interactant intactId="EBI-18053395">
        <id>Q7Z5P4</id>
        <label>HSD17B13</label>
    </interactant>
    <organismsDiffer>false</organismsDiffer>
    <experiments>3</experiments>
</comment>
<comment type="interaction">
    <interactant intactId="EBI-10329948">
        <id>Q9Y6X1</id>
    </interactant>
    <interactant intactId="EBI-1757512">
        <id>P26951</id>
        <label>IL3RA</label>
    </interactant>
    <organismsDiffer>false</organismsDiffer>
    <experiments>3</experiments>
</comment>
<comment type="interaction">
    <interactant intactId="EBI-10329948">
        <id>Q9Y6X1</id>
    </interactant>
    <interactant intactId="EBI-10266796">
        <id>Q8N5M9</id>
        <label>JAGN1</label>
    </interactant>
    <organismsDiffer>false</organismsDiffer>
    <experiments>3</experiments>
</comment>
<comment type="interaction">
    <interactant intactId="EBI-10329948">
        <id>Q9Y6X1</id>
    </interactant>
    <interactant intactId="EBI-6918743">
        <id>Q9H3M0</id>
        <label>KCNF1</label>
    </interactant>
    <organismsDiffer>false</organismsDiffer>
    <experiments>4</experiments>
</comment>
<comment type="interaction">
    <interactant intactId="EBI-10329948">
        <id>Q9Y6X1</id>
    </interactant>
    <interactant intactId="EBI-17272405">
        <id>Q8N743</id>
        <label>KIR3DL3</label>
    </interactant>
    <organismsDiffer>false</organismsDiffer>
    <experiments>3</experiments>
</comment>
<comment type="interaction">
    <interactant intactId="EBI-10329948">
        <id>Q9Y6X1</id>
    </interactant>
    <interactant intactId="EBI-2820517">
        <id>Q8TAF8</id>
        <label>LHFPL5</label>
    </interactant>
    <organismsDiffer>false</organismsDiffer>
    <experiments>3</experiments>
</comment>
<comment type="interaction">
    <interactant intactId="EBI-10329948">
        <id>Q9Y6X1</id>
    </interactant>
    <interactant intactId="EBI-373355">
        <id>Q5SR56</id>
        <label>MFSD14B</label>
    </interactant>
    <organismsDiffer>false</organismsDiffer>
    <experiments>3</experiments>
</comment>
<comment type="interaction">
    <interactant intactId="EBI-10329948">
        <id>Q9Y6X1</id>
    </interactant>
    <interactant intactId="EBI-3923617">
        <id>Q9H2K0</id>
        <label>MTIF3</label>
    </interactant>
    <organismsDiffer>false</organismsDiffer>
    <experiments>3</experiments>
</comment>
<comment type="interaction">
    <interactant intactId="EBI-10329948">
        <id>Q9Y6X1</id>
    </interactant>
    <interactant intactId="EBI-18063495">
        <id>Q8TBJ4</id>
        <label>PLPPR1</label>
    </interactant>
    <organismsDiffer>false</organismsDiffer>
    <experiments>3</experiments>
</comment>
<comment type="interaction">
    <interactant intactId="EBI-10329948">
        <id>Q9Y6X1</id>
    </interactant>
    <interactant intactId="EBI-7545592">
        <id>Q9H6H4</id>
        <label>REEP4</label>
    </interactant>
    <organismsDiffer>false</organismsDiffer>
    <experiments>3</experiments>
</comment>
<comment type="interaction">
    <interactant intactId="EBI-10329948">
        <id>Q9Y6X1</id>
    </interactant>
    <interactant intactId="EBI-3920694">
        <id>Q9NR31</id>
        <label>SAR1A</label>
    </interactant>
    <organismsDiffer>false</organismsDiffer>
    <experiments>3</experiments>
</comment>
<comment type="interaction">
    <interactant intactId="EBI-10329948">
        <id>Q9Y6X1</id>
    </interactant>
    <interactant intactId="EBI-2855401">
        <id>Q9BY50</id>
        <label>SEC11C</label>
    </interactant>
    <organismsDiffer>false</organismsDiffer>
    <experiments>3</experiments>
</comment>
<comment type="interaction">
    <interactant intactId="EBI-10329948">
        <id>Q9Y6X1</id>
    </interactant>
    <interactant intactId="EBI-18159983">
        <id>Q3KNW5</id>
        <label>SLC10A6</label>
    </interactant>
    <organismsDiffer>false</organismsDiffer>
    <experiments>3</experiments>
</comment>
<comment type="interaction">
    <interactant intactId="EBI-10329948">
        <id>Q9Y6X1</id>
    </interactant>
    <interactant intactId="EBI-17295964">
        <id>Q9NQQ7-3</id>
        <label>SLC35C2</label>
    </interactant>
    <organismsDiffer>false</organismsDiffer>
    <experiments>3</experiments>
</comment>
<comment type="interaction">
    <interactant intactId="EBI-10329948">
        <id>Q9Y6X1</id>
    </interactant>
    <interactant intactId="EBI-17280858">
        <id>Q8WWF3</id>
        <label>SSMEM1</label>
    </interactant>
    <organismsDiffer>false</organismsDiffer>
    <experiments>3</experiments>
</comment>
<comment type="interaction">
    <interactant intactId="EBI-10329948">
        <id>Q9Y6X1</id>
    </interactant>
    <interactant intactId="EBI-712466">
        <id>Q16623</id>
        <label>STX1A</label>
    </interactant>
    <organismsDiffer>false</organismsDiffer>
    <experiments>3</experiments>
</comment>
<comment type="interaction">
    <interactant intactId="EBI-10329948">
        <id>Q9Y6X1</id>
    </interactant>
    <interactant intactId="EBI-11956649">
        <id>P32856-2</id>
        <label>STX2</label>
    </interactant>
    <organismsDiffer>false</organismsDiffer>
    <experiments>3</experiments>
</comment>
<comment type="interaction">
    <interactant intactId="EBI-10329948">
        <id>Q9Y6X1</id>
    </interactant>
    <interactant intactId="EBI-744942">
        <id>Q12846</id>
        <label>STX4</label>
    </interactant>
    <organismsDiffer>false</organismsDiffer>
    <experiments>3</experiments>
</comment>
<comment type="interaction">
    <interactant intactId="EBI-10329948">
        <id>Q9Y6X1</id>
    </interactant>
    <interactant intactId="EBI-12947623">
        <id>Q96MV1</id>
        <label>TLCD4</label>
    </interactant>
    <organismsDiffer>false</organismsDiffer>
    <experiments>3</experiments>
</comment>
<comment type="interaction">
    <interactant intactId="EBI-10329948">
        <id>Q9Y6X1</id>
    </interactant>
    <interactant intactId="EBI-8638294">
        <id>Q9NUH8</id>
        <label>TMEM14B</label>
    </interactant>
    <organismsDiffer>false</organismsDiffer>
    <experiments>3</experiments>
</comment>
<comment type="interaction">
    <interactant intactId="EBI-10329948">
        <id>Q9Y6X1</id>
    </interactant>
    <interactant intactId="EBI-18178701">
        <id>Q4KMG9</id>
        <label>TMEM52B</label>
    </interactant>
    <organismsDiffer>false</organismsDiffer>
    <experiments>3</experiments>
</comment>
<comment type="interaction">
    <interactant intactId="EBI-10329948">
        <id>Q9Y6X1</id>
    </interactant>
    <interactant intactId="EBI-8649725">
        <id>Q9BSE2</id>
        <label>TMEM79</label>
    </interactant>
    <organismsDiffer>false</organismsDiffer>
    <experiments>3</experiments>
</comment>
<comment type="interaction">
    <interactant intactId="EBI-10329948">
        <id>Q9Y6X1</id>
    </interactant>
    <interactant intactId="EBI-12945620">
        <id>Q07011</id>
        <label>TNFRSF9</label>
    </interactant>
    <organismsDiffer>false</organismsDiffer>
    <experiments>3</experiments>
</comment>
<comment type="subcellular location">
    <subcellularLocation>
        <location evidence="1">Membrane</location>
        <topology evidence="1">Single-pass membrane protein</topology>
    </subcellularLocation>
    <subcellularLocation>
        <location evidence="1">Endoplasmic reticulum membrane</location>
        <topology evidence="1">Single-pass membrane protein</topology>
    </subcellularLocation>
</comment>
<comment type="similarity">
    <text evidence="4">Belongs to the RAMP4 family.</text>
</comment>
<name>SERP1_HUMAN</name>
<dbReference type="EMBL" id="AB022427">
    <property type="protein sequence ID" value="BAA81895.1"/>
    <property type="molecule type" value="mRNA"/>
</dbReference>
<dbReference type="EMBL" id="AF136975">
    <property type="protein sequence ID" value="AAG49436.1"/>
    <property type="molecule type" value="mRNA"/>
</dbReference>
<dbReference type="EMBL" id="AL136807">
    <property type="protein sequence ID" value="CAB66741.1"/>
    <property type="molecule type" value="mRNA"/>
</dbReference>
<dbReference type="EMBL" id="CR533472">
    <property type="protein sequence ID" value="CAG38503.1"/>
    <property type="molecule type" value="mRNA"/>
</dbReference>
<dbReference type="EMBL" id="CH471052">
    <property type="protein sequence ID" value="EAW78834.1"/>
    <property type="molecule type" value="Genomic_DNA"/>
</dbReference>
<dbReference type="EMBL" id="CH471052">
    <property type="protein sequence ID" value="EAW78835.1"/>
    <property type="molecule type" value="Genomic_DNA"/>
</dbReference>
<dbReference type="EMBL" id="CH471052">
    <property type="protein sequence ID" value="EAW78836.1"/>
    <property type="molecule type" value="Genomic_DNA"/>
</dbReference>
<dbReference type="EMBL" id="BC108314">
    <property type="protein sequence ID" value="AAI08315.1"/>
    <property type="molecule type" value="mRNA"/>
</dbReference>
<dbReference type="EMBL" id="BC112364">
    <property type="protein sequence ID" value="AAI12365.1"/>
    <property type="molecule type" value="mRNA"/>
</dbReference>
<dbReference type="EMBL" id="BC112365">
    <property type="protein sequence ID" value="AAI12366.1"/>
    <property type="molecule type" value="mRNA"/>
</dbReference>
<dbReference type="CCDS" id="CCDS3150.1"/>
<dbReference type="RefSeq" id="NP_055260.1">
    <property type="nucleotide sequence ID" value="NM_014445.4"/>
</dbReference>
<dbReference type="RefSeq" id="XP_011511000.1">
    <property type="nucleotide sequence ID" value="XM_011512698.2"/>
</dbReference>
<dbReference type="SMR" id="Q9Y6X1"/>
<dbReference type="BioGRID" id="118079">
    <property type="interactions" value="69"/>
</dbReference>
<dbReference type="FunCoup" id="Q9Y6X1">
    <property type="interactions" value="1041"/>
</dbReference>
<dbReference type="IntAct" id="Q9Y6X1">
    <property type="interactions" value="44"/>
</dbReference>
<dbReference type="STRING" id="9606.ENSP00000420076"/>
<dbReference type="iPTMnet" id="Q9Y6X1"/>
<dbReference type="PhosphoSitePlus" id="Q9Y6X1"/>
<dbReference type="BioMuta" id="SERP1"/>
<dbReference type="DMDM" id="74721555"/>
<dbReference type="jPOST" id="Q9Y6X1"/>
<dbReference type="MassIVE" id="Q9Y6X1"/>
<dbReference type="PaxDb" id="9606-ENSP00000420076"/>
<dbReference type="PeptideAtlas" id="Q9Y6X1"/>
<dbReference type="ProteomicsDB" id="86809"/>
<dbReference type="TopDownProteomics" id="Q9Y6X1"/>
<dbReference type="Antibodypedia" id="46738">
    <property type="antibodies" value="108 antibodies from 24 providers"/>
</dbReference>
<dbReference type="DNASU" id="27230"/>
<dbReference type="Ensembl" id="ENST00000239944.7">
    <property type="protein sequence ID" value="ENSP00000239944.2"/>
    <property type="gene ID" value="ENSG00000120742.11"/>
</dbReference>
<dbReference type="Ensembl" id="ENST00000479209.1">
    <property type="protein sequence ID" value="ENSP00000420076.1"/>
    <property type="gene ID" value="ENSG00000120742.11"/>
</dbReference>
<dbReference type="GeneID" id="27230"/>
<dbReference type="KEGG" id="hsa:27230"/>
<dbReference type="MANE-Select" id="ENST00000239944.7">
    <property type="protein sequence ID" value="ENSP00000239944.2"/>
    <property type="RefSeq nucleotide sequence ID" value="NM_014445.4"/>
    <property type="RefSeq protein sequence ID" value="NP_055260.1"/>
</dbReference>
<dbReference type="UCSC" id="uc003exy.4">
    <property type="organism name" value="human"/>
</dbReference>
<dbReference type="AGR" id="HGNC:10759"/>
<dbReference type="CTD" id="27230"/>
<dbReference type="DisGeNET" id="27230"/>
<dbReference type="GeneCards" id="SERP1"/>
<dbReference type="HGNC" id="HGNC:10759">
    <property type="gene designation" value="SERP1"/>
</dbReference>
<dbReference type="HPA" id="ENSG00000120742">
    <property type="expression patterns" value="Low tissue specificity"/>
</dbReference>
<dbReference type="MIM" id="617674">
    <property type="type" value="gene"/>
</dbReference>
<dbReference type="neXtProt" id="NX_Q9Y6X1"/>
<dbReference type="OpenTargets" id="ENSG00000120742"/>
<dbReference type="PharmGKB" id="PA162402942"/>
<dbReference type="VEuPathDB" id="HostDB:ENSG00000120742"/>
<dbReference type="eggNOG" id="KOG3491">
    <property type="taxonomic scope" value="Eukaryota"/>
</dbReference>
<dbReference type="GeneTree" id="ENSGT00940000161729"/>
<dbReference type="HOGENOM" id="CLU_160944_3_0_1"/>
<dbReference type="InParanoid" id="Q9Y6X1"/>
<dbReference type="OMA" id="WIRMANE"/>
<dbReference type="OrthoDB" id="16679at2759"/>
<dbReference type="PAN-GO" id="Q9Y6X1">
    <property type="GO annotations" value="2 GO annotations based on evolutionary models"/>
</dbReference>
<dbReference type="PhylomeDB" id="Q9Y6X1"/>
<dbReference type="TreeFam" id="TF313229"/>
<dbReference type="PathwayCommons" id="Q9Y6X1"/>
<dbReference type="Reactome" id="R-HSA-381038">
    <property type="pathway name" value="XBP1(S) activates chaperone genes"/>
</dbReference>
<dbReference type="Reactome" id="R-HSA-9609523">
    <property type="pathway name" value="Insertion of tail-anchored proteins into the endoplasmic reticulum membrane"/>
</dbReference>
<dbReference type="SignaLink" id="Q9Y6X1"/>
<dbReference type="BioGRID-ORCS" id="27230">
    <property type="hits" value="24 hits in 1146 CRISPR screens"/>
</dbReference>
<dbReference type="ChiTaRS" id="SERP1">
    <property type="organism name" value="human"/>
</dbReference>
<dbReference type="GeneWiki" id="SERP1"/>
<dbReference type="GenomeRNAi" id="27230"/>
<dbReference type="Pharos" id="Q9Y6X1">
    <property type="development level" value="Tbio"/>
</dbReference>
<dbReference type="PRO" id="PR:Q9Y6X1"/>
<dbReference type="Proteomes" id="UP000005640">
    <property type="component" value="Chromosome 3"/>
</dbReference>
<dbReference type="RNAct" id="Q9Y6X1">
    <property type="molecule type" value="protein"/>
</dbReference>
<dbReference type="Bgee" id="ENSG00000120742">
    <property type="expression patterns" value="Expressed in parotid gland and 207 other cell types or tissues"/>
</dbReference>
<dbReference type="ExpressionAtlas" id="Q9Y6X1">
    <property type="expression patterns" value="baseline and differential"/>
</dbReference>
<dbReference type="GO" id="GO:0005881">
    <property type="term" value="C:cytoplasmic microtubule"/>
    <property type="evidence" value="ECO:0000314"/>
    <property type="project" value="UniProtKB"/>
</dbReference>
<dbReference type="GO" id="GO:0005829">
    <property type="term" value="C:cytosol"/>
    <property type="evidence" value="ECO:0000304"/>
    <property type="project" value="Reactome"/>
</dbReference>
<dbReference type="GO" id="GO:0005783">
    <property type="term" value="C:endoplasmic reticulum"/>
    <property type="evidence" value="ECO:0000318"/>
    <property type="project" value="GO_Central"/>
</dbReference>
<dbReference type="GO" id="GO:0005789">
    <property type="term" value="C:endoplasmic reticulum membrane"/>
    <property type="evidence" value="ECO:0000304"/>
    <property type="project" value="Reactome"/>
</dbReference>
<dbReference type="GO" id="GO:0005840">
    <property type="term" value="C:ribosome"/>
    <property type="evidence" value="ECO:0000304"/>
    <property type="project" value="ProtInc"/>
</dbReference>
<dbReference type="GO" id="GO:0030968">
    <property type="term" value="P:endoplasmic reticulum unfolded protein response"/>
    <property type="evidence" value="ECO:0000318"/>
    <property type="project" value="GO_Central"/>
</dbReference>
<dbReference type="GO" id="GO:0006006">
    <property type="term" value="P:glucose metabolic process"/>
    <property type="evidence" value="ECO:0007669"/>
    <property type="project" value="Ensembl"/>
</dbReference>
<dbReference type="GO" id="GO:0030073">
    <property type="term" value="P:insulin secretion"/>
    <property type="evidence" value="ECO:0007669"/>
    <property type="project" value="Ensembl"/>
</dbReference>
<dbReference type="GO" id="GO:0048644">
    <property type="term" value="P:muscle organ morphogenesis"/>
    <property type="evidence" value="ECO:0007669"/>
    <property type="project" value="Ensembl"/>
</dbReference>
<dbReference type="GO" id="GO:0007009">
    <property type="term" value="P:plasma membrane organization"/>
    <property type="evidence" value="ECO:0000304"/>
    <property type="project" value="ProtInc"/>
</dbReference>
<dbReference type="GO" id="GO:0060124">
    <property type="term" value="P:positive regulation of growth hormone secretion"/>
    <property type="evidence" value="ECO:0007669"/>
    <property type="project" value="Ensembl"/>
</dbReference>
<dbReference type="GO" id="GO:0032024">
    <property type="term" value="P:positive regulation of insulin secretion"/>
    <property type="evidence" value="ECO:0007669"/>
    <property type="project" value="Ensembl"/>
</dbReference>
<dbReference type="GO" id="GO:0046622">
    <property type="term" value="P:positive regulation of organ growth"/>
    <property type="evidence" value="ECO:0007669"/>
    <property type="project" value="Ensembl"/>
</dbReference>
<dbReference type="GO" id="GO:0045727">
    <property type="term" value="P:positive regulation of translation"/>
    <property type="evidence" value="ECO:0007669"/>
    <property type="project" value="Ensembl"/>
</dbReference>
<dbReference type="GO" id="GO:0009791">
    <property type="term" value="P:post-embryonic development"/>
    <property type="evidence" value="ECO:0007669"/>
    <property type="project" value="Ensembl"/>
</dbReference>
<dbReference type="GO" id="GO:0006486">
    <property type="term" value="P:protein glycosylation"/>
    <property type="evidence" value="ECO:0000304"/>
    <property type="project" value="ProtInc"/>
</dbReference>
<dbReference type="GO" id="GO:0036211">
    <property type="term" value="P:protein modification process"/>
    <property type="evidence" value="ECO:0000304"/>
    <property type="project" value="ProtInc"/>
</dbReference>
<dbReference type="GO" id="GO:0001501">
    <property type="term" value="P:skeletal system development"/>
    <property type="evidence" value="ECO:0007669"/>
    <property type="project" value="Ensembl"/>
</dbReference>
<dbReference type="InterPro" id="IPR010580">
    <property type="entry name" value="ER_stress-assoc"/>
</dbReference>
<dbReference type="PANTHER" id="PTHR15601">
    <property type="entry name" value="STRESS ASSOCIATED ENDOPLASMIC RETICULUM PROTEIN SERP1/RAMP4"/>
    <property type="match status" value="1"/>
</dbReference>
<dbReference type="PANTHER" id="PTHR15601:SF14">
    <property type="entry name" value="STRESS-ASSOCIATED ENDOPLASMIC RETICULUM PROTEIN 1"/>
    <property type="match status" value="1"/>
</dbReference>
<dbReference type="Pfam" id="PF06624">
    <property type="entry name" value="RAMP4"/>
    <property type="match status" value="1"/>
</dbReference>
<reference key="1">
    <citation type="submission" date="1999-01" db="EMBL/GenBank/DDBJ databases">
        <title>Human SERP1.</title>
        <authorList>
            <person name="Yamaguchi A."/>
            <person name="Hori O."/>
            <person name="Ogawa S."/>
        </authorList>
    </citation>
    <scope>NUCLEOTIDE SEQUENCE [MRNA]</scope>
</reference>
<reference key="2">
    <citation type="journal article" date="2000" name="Proc. Natl. Acad. Sci. U.S.A.">
        <title>Gene expression profiling in the human hypothalamus-pituitary-adrenal axis and full-length cDNA cloning.</title>
        <authorList>
            <person name="Hu R.-M."/>
            <person name="Han Z.-G."/>
            <person name="Song H.-D."/>
            <person name="Peng Y.-D."/>
            <person name="Huang Q.-H."/>
            <person name="Ren S.-X."/>
            <person name="Gu Y.-J."/>
            <person name="Huang C.-H."/>
            <person name="Li Y.-B."/>
            <person name="Jiang C.-L."/>
            <person name="Fu G."/>
            <person name="Zhang Q.-H."/>
            <person name="Gu B.-W."/>
            <person name="Dai M."/>
            <person name="Mao Y.-F."/>
            <person name="Gao G.-F."/>
            <person name="Rong R."/>
            <person name="Ye M."/>
            <person name="Zhou J."/>
            <person name="Xu S.-H."/>
            <person name="Gu J."/>
            <person name="Shi J.-X."/>
            <person name="Jin W.-R."/>
            <person name="Zhang C.-K."/>
            <person name="Wu T.-M."/>
            <person name="Huang G.-Y."/>
            <person name="Chen Z."/>
            <person name="Chen M.-D."/>
            <person name="Chen J.-L."/>
        </authorList>
    </citation>
    <scope>NUCLEOTIDE SEQUENCE [LARGE SCALE MRNA]</scope>
    <source>
        <tissue>Adrenal gland</tissue>
    </source>
</reference>
<reference key="3">
    <citation type="journal article" date="2001" name="Genome Res.">
        <title>Towards a catalog of human genes and proteins: sequencing and analysis of 500 novel complete protein coding human cDNAs.</title>
        <authorList>
            <person name="Wiemann S."/>
            <person name="Weil B."/>
            <person name="Wellenreuther R."/>
            <person name="Gassenhuber J."/>
            <person name="Glassl S."/>
            <person name="Ansorge W."/>
            <person name="Boecher M."/>
            <person name="Bloecker H."/>
            <person name="Bauersachs S."/>
            <person name="Blum H."/>
            <person name="Lauber J."/>
            <person name="Duesterhoeft A."/>
            <person name="Beyer A."/>
            <person name="Koehrer K."/>
            <person name="Strack N."/>
            <person name="Mewes H.-W."/>
            <person name="Ottenwaelder B."/>
            <person name="Obermaier B."/>
            <person name="Tampe J."/>
            <person name="Heubner D."/>
            <person name="Wambutt R."/>
            <person name="Korn B."/>
            <person name="Klein M."/>
            <person name="Poustka A."/>
        </authorList>
    </citation>
    <scope>NUCLEOTIDE SEQUENCE [LARGE SCALE MRNA]</scope>
    <source>
        <tissue>Testis</tissue>
    </source>
</reference>
<reference key="4">
    <citation type="submission" date="2004-06" db="EMBL/GenBank/DDBJ databases">
        <title>Cloning of human full open reading frames in Gateway(TM) system entry vector (pDONR201).</title>
        <authorList>
            <person name="Ebert L."/>
            <person name="Schick M."/>
            <person name="Neubert P."/>
            <person name="Schatten R."/>
            <person name="Henze S."/>
            <person name="Korn B."/>
        </authorList>
    </citation>
    <scope>NUCLEOTIDE SEQUENCE [LARGE SCALE MRNA]</scope>
</reference>
<reference key="5">
    <citation type="submission" date="2005-09" db="EMBL/GenBank/DDBJ databases">
        <authorList>
            <person name="Mural R.J."/>
            <person name="Istrail S."/>
            <person name="Sutton G.G."/>
            <person name="Florea L."/>
            <person name="Halpern A.L."/>
            <person name="Mobarry C.M."/>
            <person name="Lippert R."/>
            <person name="Walenz B."/>
            <person name="Shatkay H."/>
            <person name="Dew I."/>
            <person name="Miller J.R."/>
            <person name="Flanigan M.J."/>
            <person name="Edwards N.J."/>
            <person name="Bolanos R."/>
            <person name="Fasulo D."/>
            <person name="Halldorsson B.V."/>
            <person name="Hannenhalli S."/>
            <person name="Turner R."/>
            <person name="Yooseph S."/>
            <person name="Lu F."/>
            <person name="Nusskern D.R."/>
            <person name="Shue B.C."/>
            <person name="Zheng X.H."/>
            <person name="Zhong F."/>
            <person name="Delcher A.L."/>
            <person name="Huson D.H."/>
            <person name="Kravitz S.A."/>
            <person name="Mouchard L."/>
            <person name="Reinert K."/>
            <person name="Remington K.A."/>
            <person name="Clark A.G."/>
            <person name="Waterman M.S."/>
            <person name="Eichler E.E."/>
            <person name="Adams M.D."/>
            <person name="Hunkapiller M.W."/>
            <person name="Myers E.W."/>
            <person name="Venter J.C."/>
        </authorList>
    </citation>
    <scope>NUCLEOTIDE SEQUENCE [LARGE SCALE GENOMIC DNA]</scope>
</reference>
<reference key="6">
    <citation type="journal article" date="2004" name="Genome Res.">
        <title>The status, quality, and expansion of the NIH full-length cDNA project: the Mammalian Gene Collection (MGC).</title>
        <authorList>
            <consortium name="The MGC Project Team"/>
        </authorList>
    </citation>
    <scope>NUCLEOTIDE SEQUENCE [LARGE SCALE MRNA]</scope>
    <source>
        <tissue>Uterus</tissue>
    </source>
</reference>
<feature type="chain" id="PRO_0000274794" description="Stress-associated endoplasmic reticulum protein 1">
    <location>
        <begin position="1"/>
        <end position="66"/>
    </location>
</feature>
<feature type="transmembrane region" description="Helical" evidence="2">
    <location>
        <begin position="39"/>
        <end position="59"/>
    </location>
</feature>
<feature type="region of interest" description="Disordered" evidence="3">
    <location>
        <begin position="1"/>
        <end position="31"/>
    </location>
</feature>
<feature type="compositionally biased region" description="Polar residues" evidence="3">
    <location>
        <begin position="17"/>
        <end position="30"/>
    </location>
</feature>
<sequence>MVAKQRIRMANEKHSKNITQRGNVAKTSRNAPEEKASVGPWLLALFIFVVCGSAIFQIIQSIRMGM</sequence>
<gene>
    <name type="primary">SERP1</name>
    <name type="synonym">RAMP4</name>
</gene>
<accession>Q9Y6X1</accession>
<accession>D3DNI6</accession>